<comment type="function">
    <text evidence="1">Functions as a transactivator of PPARG and ESR1. Functions in adipogenesis through PPARG activation (By similarity).</text>
</comment>
<comment type="subunit">
    <text evidence="1">Interacts with ESR1 and RXRA. Interacts with PPARG; in a ligand-independent manner (By similarity).</text>
</comment>
<comment type="subcellular location">
    <subcellularLocation>
        <location evidence="1">Nucleus</location>
    </subcellularLocation>
</comment>
<comment type="similarity">
    <text evidence="2">Belongs to the constitutive coactivator of PPAR-gamma family.</text>
</comment>
<protein>
    <recommendedName>
        <fullName>Constitutive coactivator of peroxisome proliferator-activated receptor gamma</fullName>
        <shortName>Constitutive coactivator of PPAR-gamma</shortName>
        <shortName>Constitutive coactivator of PPARG</shortName>
    </recommendedName>
    <alternativeName>
        <fullName>Protein FAM120B</fullName>
    </alternativeName>
</protein>
<reference key="1">
    <citation type="submission" date="2007-07" db="EMBL/GenBank/DDBJ databases">
        <authorList>
            <consortium name="NIH - Mammalian Gene Collection (MGC) project"/>
        </authorList>
    </citation>
    <scope>NUCLEOTIDE SEQUENCE [LARGE SCALE MRNA]</scope>
    <source>
        <strain>Hereford</strain>
        <tissue>Fetal skin</tissue>
    </source>
</reference>
<gene>
    <name type="primary">FAM120B</name>
    <name type="synonym">CCPG</name>
</gene>
<feature type="chain" id="PRO_0000332989" description="Constitutive coactivator of peroxisome proliferator-activated receptor gamma">
    <location>
        <begin position="1"/>
        <end position="700"/>
    </location>
</feature>
<proteinExistence type="evidence at transcript level"/>
<organism>
    <name type="scientific">Bos taurus</name>
    <name type="common">Bovine</name>
    <dbReference type="NCBI Taxonomy" id="9913"/>
    <lineage>
        <taxon>Eukaryota</taxon>
        <taxon>Metazoa</taxon>
        <taxon>Chordata</taxon>
        <taxon>Craniata</taxon>
        <taxon>Vertebrata</taxon>
        <taxon>Euteleostomi</taxon>
        <taxon>Mammalia</taxon>
        <taxon>Eutheria</taxon>
        <taxon>Laurasiatheria</taxon>
        <taxon>Artiodactyla</taxon>
        <taxon>Ruminantia</taxon>
        <taxon>Pecora</taxon>
        <taxon>Bovidae</taxon>
        <taxon>Bovinae</taxon>
        <taxon>Bos</taxon>
    </lineage>
</organism>
<dbReference type="EMBL" id="BC148988">
    <property type="protein sequence ID" value="AAI48989.1"/>
    <property type="molecule type" value="mRNA"/>
</dbReference>
<dbReference type="RefSeq" id="NP_001095977.1">
    <property type="nucleotide sequence ID" value="NM_001102507.1"/>
</dbReference>
<dbReference type="SMR" id="A6QNT4"/>
<dbReference type="FunCoup" id="A6QNT4">
    <property type="interactions" value="4754"/>
</dbReference>
<dbReference type="STRING" id="9913.ENSBTAP00000059855"/>
<dbReference type="Ensembl" id="ENSBTAT00000055791.3">
    <property type="protein sequence ID" value="ENSBTAP00000053047.2"/>
    <property type="gene ID" value="ENSBTAG00000003884.7"/>
</dbReference>
<dbReference type="GeneID" id="524306"/>
<dbReference type="KEGG" id="bta:524306"/>
<dbReference type="CTD" id="84498"/>
<dbReference type="VEuPathDB" id="HostDB:ENSBTAG00000003884"/>
<dbReference type="VGNC" id="VGNC:50072">
    <property type="gene designation" value="FAM120B"/>
</dbReference>
<dbReference type="eggNOG" id="ENOG502QRMW">
    <property type="taxonomic scope" value="Eukaryota"/>
</dbReference>
<dbReference type="GeneTree" id="ENSGT00530000063168"/>
<dbReference type="HOGENOM" id="CLU_007639_0_0_1"/>
<dbReference type="InParanoid" id="A6QNT4"/>
<dbReference type="OrthoDB" id="25987at2759"/>
<dbReference type="CD-CODE" id="D7FE2080">
    <property type="entry name" value="Nucleolus"/>
</dbReference>
<dbReference type="Proteomes" id="UP000009136">
    <property type="component" value="Chromosome 9"/>
</dbReference>
<dbReference type="Bgee" id="ENSBTAG00000003884">
    <property type="expression patterns" value="Expressed in oocyte and 110 other cell types or tissues"/>
</dbReference>
<dbReference type="GO" id="GO:0005634">
    <property type="term" value="C:nucleus"/>
    <property type="evidence" value="ECO:0000318"/>
    <property type="project" value="GO_Central"/>
</dbReference>
<dbReference type="GO" id="GO:0045444">
    <property type="term" value="P:fat cell differentiation"/>
    <property type="evidence" value="ECO:0000318"/>
    <property type="project" value="GO_Central"/>
</dbReference>
<dbReference type="GO" id="GO:0035357">
    <property type="term" value="P:peroxisome proliferator activated receptor signaling pathway"/>
    <property type="evidence" value="ECO:0000318"/>
    <property type="project" value="GO_Central"/>
</dbReference>
<dbReference type="CDD" id="cd18672">
    <property type="entry name" value="PIN_FAM120B-like"/>
    <property type="match status" value="1"/>
</dbReference>
<dbReference type="FunFam" id="3.40.50.1010:FF:000013">
    <property type="entry name" value="Constitutive coactivator of peroxisome proliferator-activated receptor gamma"/>
    <property type="match status" value="1"/>
</dbReference>
<dbReference type="Gene3D" id="3.40.50.1010">
    <property type="entry name" value="5'-nuclease"/>
    <property type="match status" value="1"/>
</dbReference>
<dbReference type="InterPro" id="IPR026784">
    <property type="entry name" value="Coact_PPARg"/>
</dbReference>
<dbReference type="InterPro" id="IPR029060">
    <property type="entry name" value="PIN-like_dom_sf"/>
</dbReference>
<dbReference type="PANTHER" id="PTHR15976">
    <property type="entry name" value="CONSTITUTIVE COACTIVATOR OF PEROXISOME PROLIFERATOR-ACTIVATED RECEPTOR GAMMA"/>
    <property type="match status" value="1"/>
</dbReference>
<dbReference type="PANTHER" id="PTHR15976:SF17">
    <property type="entry name" value="CONSTITUTIVE COACTIVATOR OF PEROXISOME PROLIFERATOR-ACTIVATED RECEPTOR GAMMA"/>
    <property type="match status" value="1"/>
</dbReference>
<dbReference type="SUPFAM" id="SSF88723">
    <property type="entry name" value="PIN domain-like"/>
    <property type="match status" value="1"/>
</dbReference>
<sequence length="700" mass="79076">MGVRGLHGFVASSCPHVCTVVNFKELAERHRSQHPGGTPTIVVDAMCCLRYWYTPESWVCGGQWREYYSSLREFVRTFTAVGIKLIFFFDGMVEQSKRDEWVKRRLKNNREIAKIFHYIKSRREQPGRNMFFIPSGLAIFTRFALKALGQETLCSLQEADYEVASYGFQNNCLGILGEDTDYLIYDTCPYFSISELSLDSLDTVMLCREKLCQSLGLHLADLPLLACLLGNDVIPEGMFESFRYKCLTSYASVRESCDRKGNVILAVAEHISKVLRLHQGEKKLEEMLPLGPNKALFYKGVASYLLPGQKSPWFIQKPEDVVTLDKQVLSMSSDPESKQEFPVCMDSESKQKLPVGTDPEFNLEAPMCTNTEVKQEDPVNVGPEAKHQVTVVLDPEILKVARAQHVQAESYLVYSVMSSGEVECSNSLEDATDQALPSQAFVYRPVRQRVYSLLLGGGGGGSSTGPAVKEWFVYSGNPLRQPDLVRPLQMNIPGGTPSLRQLWLSQEPGIQAQRLDTLLACFDLSSSREELQAVERPFQALCCLLVYLFVQVDTLCLEDLHAFIAQALCLQGKPTMELADLQLDHIDPRAVQLATLLVRGLTTLVLVNGACGSPWEMADFMPWHLFDGKLFHQKYLQSEKGYTAEVLVEQNRSHVTRFHTLKSVVCKACGKESRPIVSRRHWRPHHAGSRQYEPDQWRRY</sequence>
<name>F120B_BOVIN</name>
<evidence type="ECO:0000250" key="1"/>
<evidence type="ECO:0000305" key="2"/>
<accession>A6QNT4</accession>
<keyword id="KW-0010">Activator</keyword>
<keyword id="KW-0221">Differentiation</keyword>
<keyword id="KW-0539">Nucleus</keyword>
<keyword id="KW-1185">Reference proteome</keyword>
<keyword id="KW-0804">Transcription</keyword>
<keyword id="KW-0805">Transcription regulation</keyword>